<keyword id="KW-0963">Cytoplasm</keyword>
<keyword id="KW-0275">Fatty acid biosynthesis</keyword>
<keyword id="KW-0276">Fatty acid metabolism</keyword>
<keyword id="KW-0444">Lipid biosynthesis</keyword>
<keyword id="KW-0443">Lipid metabolism</keyword>
<keyword id="KW-0596">Phosphopantetheine</keyword>
<keyword id="KW-0597">Phosphoprotein</keyword>
<reference key="1">
    <citation type="journal article" date="2006" name="Lancet">
        <title>Complete genome sequence of USA300, an epidemic clone of community-acquired meticillin-resistant Staphylococcus aureus.</title>
        <authorList>
            <person name="Diep B.A."/>
            <person name="Gill S.R."/>
            <person name="Chang R.F."/>
            <person name="Phan T.H."/>
            <person name="Chen J.H."/>
            <person name="Davidson M.G."/>
            <person name="Lin F."/>
            <person name="Lin J."/>
            <person name="Carleton H.A."/>
            <person name="Mongodin E.F."/>
            <person name="Sensabaugh G.F."/>
            <person name="Perdreau-Remington F."/>
        </authorList>
    </citation>
    <scope>NUCLEOTIDE SEQUENCE [LARGE SCALE GENOMIC DNA]</scope>
    <source>
        <strain>USA300</strain>
    </source>
</reference>
<accession>Q2FHK6</accession>
<dbReference type="EMBL" id="CP000255">
    <property type="protein sequence ID" value="ABD22509.1"/>
    <property type="molecule type" value="Genomic_DNA"/>
</dbReference>
<dbReference type="RefSeq" id="WP_000426914.1">
    <property type="nucleotide sequence ID" value="NZ_CP027476.1"/>
</dbReference>
<dbReference type="SMR" id="Q2FHK6"/>
<dbReference type="KEGG" id="saa:SAUSA300_1125"/>
<dbReference type="HOGENOM" id="CLU_108696_5_1_9"/>
<dbReference type="OMA" id="TMEASFI"/>
<dbReference type="UniPathway" id="UPA00094"/>
<dbReference type="Proteomes" id="UP000001939">
    <property type="component" value="Chromosome"/>
</dbReference>
<dbReference type="GO" id="GO:0005829">
    <property type="term" value="C:cytosol"/>
    <property type="evidence" value="ECO:0007669"/>
    <property type="project" value="TreeGrafter"/>
</dbReference>
<dbReference type="GO" id="GO:0016020">
    <property type="term" value="C:membrane"/>
    <property type="evidence" value="ECO:0007669"/>
    <property type="project" value="GOC"/>
</dbReference>
<dbReference type="GO" id="GO:0000035">
    <property type="term" value="F:acyl binding"/>
    <property type="evidence" value="ECO:0007669"/>
    <property type="project" value="TreeGrafter"/>
</dbReference>
<dbReference type="GO" id="GO:0000036">
    <property type="term" value="F:acyl carrier activity"/>
    <property type="evidence" value="ECO:0007669"/>
    <property type="project" value="UniProtKB-UniRule"/>
</dbReference>
<dbReference type="GO" id="GO:0009245">
    <property type="term" value="P:lipid A biosynthetic process"/>
    <property type="evidence" value="ECO:0007669"/>
    <property type="project" value="TreeGrafter"/>
</dbReference>
<dbReference type="FunFam" id="1.10.1200.10:FF:000001">
    <property type="entry name" value="Acyl carrier protein"/>
    <property type="match status" value="1"/>
</dbReference>
<dbReference type="Gene3D" id="1.10.1200.10">
    <property type="entry name" value="ACP-like"/>
    <property type="match status" value="1"/>
</dbReference>
<dbReference type="HAMAP" id="MF_01217">
    <property type="entry name" value="Acyl_carrier"/>
    <property type="match status" value="1"/>
</dbReference>
<dbReference type="InterPro" id="IPR003231">
    <property type="entry name" value="ACP"/>
</dbReference>
<dbReference type="InterPro" id="IPR036736">
    <property type="entry name" value="ACP-like_sf"/>
</dbReference>
<dbReference type="InterPro" id="IPR009081">
    <property type="entry name" value="PP-bd_ACP"/>
</dbReference>
<dbReference type="InterPro" id="IPR006162">
    <property type="entry name" value="Ppantetheine_attach_site"/>
</dbReference>
<dbReference type="NCBIfam" id="TIGR00517">
    <property type="entry name" value="acyl_carrier"/>
    <property type="match status" value="1"/>
</dbReference>
<dbReference type="NCBIfam" id="NF002148">
    <property type="entry name" value="PRK00982.1-2"/>
    <property type="match status" value="1"/>
</dbReference>
<dbReference type="NCBIfam" id="NF002150">
    <property type="entry name" value="PRK00982.1-4"/>
    <property type="match status" value="1"/>
</dbReference>
<dbReference type="NCBIfam" id="NF002151">
    <property type="entry name" value="PRK00982.1-5"/>
    <property type="match status" value="1"/>
</dbReference>
<dbReference type="PANTHER" id="PTHR20863">
    <property type="entry name" value="ACYL CARRIER PROTEIN"/>
    <property type="match status" value="1"/>
</dbReference>
<dbReference type="PANTHER" id="PTHR20863:SF76">
    <property type="entry name" value="CARRIER DOMAIN-CONTAINING PROTEIN"/>
    <property type="match status" value="1"/>
</dbReference>
<dbReference type="Pfam" id="PF00550">
    <property type="entry name" value="PP-binding"/>
    <property type="match status" value="1"/>
</dbReference>
<dbReference type="SUPFAM" id="SSF47336">
    <property type="entry name" value="ACP-like"/>
    <property type="match status" value="1"/>
</dbReference>
<dbReference type="PROSITE" id="PS50075">
    <property type="entry name" value="CARRIER"/>
    <property type="match status" value="1"/>
</dbReference>
<dbReference type="PROSITE" id="PS00012">
    <property type="entry name" value="PHOSPHOPANTETHEINE"/>
    <property type="match status" value="1"/>
</dbReference>
<gene>
    <name evidence="1" type="primary">acpP</name>
    <name type="ordered locus">SAUSA300_1125</name>
</gene>
<sequence>MENFDKVKDIIVDRLGVDADKVTEDASFKDDLGADSLDIAELVMELEDEFGTEIPDEEAEKINTVGDAVKFINSLEK</sequence>
<feature type="chain" id="PRO_1000066698" description="Acyl carrier protein">
    <location>
        <begin position="1"/>
        <end position="77"/>
    </location>
</feature>
<feature type="domain" description="Carrier" evidence="2">
    <location>
        <begin position="1"/>
        <end position="76"/>
    </location>
</feature>
<feature type="modified residue" description="O-(pantetheine 4'-phosphoryl)serine" evidence="2">
    <location>
        <position position="36"/>
    </location>
</feature>
<comment type="function">
    <text evidence="1">Carrier of the growing fatty acid chain in fatty acid biosynthesis.</text>
</comment>
<comment type="pathway">
    <text evidence="1">Lipid metabolism; fatty acid biosynthesis.</text>
</comment>
<comment type="subcellular location">
    <subcellularLocation>
        <location evidence="1">Cytoplasm</location>
    </subcellularLocation>
</comment>
<comment type="PTM">
    <text evidence="1">4'-phosphopantetheine is transferred from CoA to a specific serine of apo-ACP by AcpS. This modification is essential for activity because fatty acids are bound in thioester linkage to the sulfhydryl of the prosthetic group.</text>
</comment>
<comment type="similarity">
    <text evidence="1">Belongs to the acyl carrier protein (ACP) family.</text>
</comment>
<evidence type="ECO:0000255" key="1">
    <source>
        <dbReference type="HAMAP-Rule" id="MF_01217"/>
    </source>
</evidence>
<evidence type="ECO:0000255" key="2">
    <source>
        <dbReference type="PROSITE-ProRule" id="PRU00258"/>
    </source>
</evidence>
<name>ACP_STAA3</name>
<proteinExistence type="inferred from homology"/>
<organism>
    <name type="scientific">Staphylococcus aureus (strain USA300)</name>
    <dbReference type="NCBI Taxonomy" id="367830"/>
    <lineage>
        <taxon>Bacteria</taxon>
        <taxon>Bacillati</taxon>
        <taxon>Bacillota</taxon>
        <taxon>Bacilli</taxon>
        <taxon>Bacillales</taxon>
        <taxon>Staphylococcaceae</taxon>
        <taxon>Staphylococcus</taxon>
    </lineage>
</organism>
<protein>
    <recommendedName>
        <fullName evidence="1">Acyl carrier protein</fullName>
        <shortName evidence="1">ACP</shortName>
    </recommendedName>
</protein>